<proteinExistence type="inferred from homology"/>
<evidence type="ECO:0000255" key="1">
    <source>
        <dbReference type="HAMAP-Rule" id="MF_01315"/>
    </source>
</evidence>
<evidence type="ECO:0000256" key="2">
    <source>
        <dbReference type="SAM" id="MobiDB-lite"/>
    </source>
</evidence>
<evidence type="ECO:0000305" key="3"/>
<feature type="chain" id="PRO_0000306553" description="Small ribosomal subunit protein uS13">
    <location>
        <begin position="1"/>
        <end position="118"/>
    </location>
</feature>
<feature type="region of interest" description="Disordered" evidence="2">
    <location>
        <begin position="94"/>
        <end position="118"/>
    </location>
</feature>
<reference key="1">
    <citation type="journal article" date="2008" name="J. Bacteriol.">
        <title>The complete genome sequence of Actinobacillus pleuropneumoniae L20 (serotype 5b).</title>
        <authorList>
            <person name="Foote S.J."/>
            <person name="Bosse J.T."/>
            <person name="Bouevitch A.B."/>
            <person name="Langford P.R."/>
            <person name="Young N.M."/>
            <person name="Nash J.H.E."/>
        </authorList>
    </citation>
    <scope>NUCLEOTIDE SEQUENCE [LARGE SCALE GENOMIC DNA]</scope>
    <source>
        <strain>L20</strain>
    </source>
</reference>
<name>RS13_ACTP2</name>
<organism>
    <name type="scientific">Actinobacillus pleuropneumoniae serotype 5b (strain L20)</name>
    <dbReference type="NCBI Taxonomy" id="416269"/>
    <lineage>
        <taxon>Bacteria</taxon>
        <taxon>Pseudomonadati</taxon>
        <taxon>Pseudomonadota</taxon>
        <taxon>Gammaproteobacteria</taxon>
        <taxon>Pasteurellales</taxon>
        <taxon>Pasteurellaceae</taxon>
        <taxon>Actinobacillus</taxon>
    </lineage>
</organism>
<protein>
    <recommendedName>
        <fullName evidence="1">Small ribosomal subunit protein uS13</fullName>
    </recommendedName>
    <alternativeName>
        <fullName evidence="3">30S ribosomal protein S13</fullName>
    </alternativeName>
</protein>
<dbReference type="EMBL" id="CP000569">
    <property type="protein sequence ID" value="ABN74865.1"/>
    <property type="molecule type" value="Genomic_DNA"/>
</dbReference>
<dbReference type="RefSeq" id="WP_009875148.1">
    <property type="nucleotide sequence ID" value="NC_009053.1"/>
</dbReference>
<dbReference type="SMR" id="A3N379"/>
<dbReference type="STRING" id="416269.APL_1781"/>
<dbReference type="EnsemblBacteria" id="ABN74865">
    <property type="protein sequence ID" value="ABN74865"/>
    <property type="gene ID" value="APL_1781"/>
</dbReference>
<dbReference type="KEGG" id="apl:APL_1781"/>
<dbReference type="PATRIC" id="fig|416269.6.peg.1852"/>
<dbReference type="eggNOG" id="COG0099">
    <property type="taxonomic scope" value="Bacteria"/>
</dbReference>
<dbReference type="HOGENOM" id="CLU_103849_1_2_6"/>
<dbReference type="Proteomes" id="UP000001432">
    <property type="component" value="Chromosome"/>
</dbReference>
<dbReference type="GO" id="GO:0005829">
    <property type="term" value="C:cytosol"/>
    <property type="evidence" value="ECO:0007669"/>
    <property type="project" value="TreeGrafter"/>
</dbReference>
<dbReference type="GO" id="GO:0015935">
    <property type="term" value="C:small ribosomal subunit"/>
    <property type="evidence" value="ECO:0007669"/>
    <property type="project" value="TreeGrafter"/>
</dbReference>
<dbReference type="GO" id="GO:0019843">
    <property type="term" value="F:rRNA binding"/>
    <property type="evidence" value="ECO:0007669"/>
    <property type="project" value="UniProtKB-UniRule"/>
</dbReference>
<dbReference type="GO" id="GO:0003735">
    <property type="term" value="F:structural constituent of ribosome"/>
    <property type="evidence" value="ECO:0007669"/>
    <property type="project" value="InterPro"/>
</dbReference>
<dbReference type="GO" id="GO:0000049">
    <property type="term" value="F:tRNA binding"/>
    <property type="evidence" value="ECO:0007669"/>
    <property type="project" value="UniProtKB-UniRule"/>
</dbReference>
<dbReference type="GO" id="GO:0006412">
    <property type="term" value="P:translation"/>
    <property type="evidence" value="ECO:0007669"/>
    <property type="project" value="UniProtKB-UniRule"/>
</dbReference>
<dbReference type="FunFam" id="1.10.8.50:FF:000001">
    <property type="entry name" value="30S ribosomal protein S13"/>
    <property type="match status" value="1"/>
</dbReference>
<dbReference type="FunFam" id="4.10.910.10:FF:000001">
    <property type="entry name" value="30S ribosomal protein S13"/>
    <property type="match status" value="1"/>
</dbReference>
<dbReference type="Gene3D" id="1.10.8.50">
    <property type="match status" value="1"/>
</dbReference>
<dbReference type="Gene3D" id="4.10.910.10">
    <property type="entry name" value="30s ribosomal protein s13, domain 2"/>
    <property type="match status" value="1"/>
</dbReference>
<dbReference type="HAMAP" id="MF_01315">
    <property type="entry name" value="Ribosomal_uS13"/>
    <property type="match status" value="1"/>
</dbReference>
<dbReference type="InterPro" id="IPR027437">
    <property type="entry name" value="Rbsml_uS13_C"/>
</dbReference>
<dbReference type="InterPro" id="IPR001892">
    <property type="entry name" value="Ribosomal_uS13"/>
</dbReference>
<dbReference type="InterPro" id="IPR010979">
    <property type="entry name" value="Ribosomal_uS13-like_H2TH"/>
</dbReference>
<dbReference type="InterPro" id="IPR019980">
    <property type="entry name" value="Ribosomal_uS13_bac-type"/>
</dbReference>
<dbReference type="InterPro" id="IPR018269">
    <property type="entry name" value="Ribosomal_uS13_CS"/>
</dbReference>
<dbReference type="NCBIfam" id="TIGR03631">
    <property type="entry name" value="uS13_bact"/>
    <property type="match status" value="1"/>
</dbReference>
<dbReference type="PANTHER" id="PTHR10871">
    <property type="entry name" value="30S RIBOSOMAL PROTEIN S13/40S RIBOSOMAL PROTEIN S18"/>
    <property type="match status" value="1"/>
</dbReference>
<dbReference type="PANTHER" id="PTHR10871:SF1">
    <property type="entry name" value="SMALL RIBOSOMAL SUBUNIT PROTEIN US13M"/>
    <property type="match status" value="1"/>
</dbReference>
<dbReference type="Pfam" id="PF00416">
    <property type="entry name" value="Ribosomal_S13"/>
    <property type="match status" value="1"/>
</dbReference>
<dbReference type="PIRSF" id="PIRSF002134">
    <property type="entry name" value="Ribosomal_S13"/>
    <property type="match status" value="1"/>
</dbReference>
<dbReference type="SUPFAM" id="SSF46946">
    <property type="entry name" value="S13-like H2TH domain"/>
    <property type="match status" value="1"/>
</dbReference>
<dbReference type="PROSITE" id="PS00646">
    <property type="entry name" value="RIBOSOMAL_S13_1"/>
    <property type="match status" value="1"/>
</dbReference>
<dbReference type="PROSITE" id="PS50159">
    <property type="entry name" value="RIBOSOMAL_S13_2"/>
    <property type="match status" value="1"/>
</dbReference>
<accession>A3N379</accession>
<keyword id="KW-1185">Reference proteome</keyword>
<keyword id="KW-0687">Ribonucleoprotein</keyword>
<keyword id="KW-0689">Ribosomal protein</keyword>
<keyword id="KW-0694">RNA-binding</keyword>
<keyword id="KW-0699">rRNA-binding</keyword>
<keyword id="KW-0820">tRNA-binding</keyword>
<sequence length="118" mass="13329">MARIAGINIPDQKHTVIALTAIYGIGKTRAKAICAVTGIAEDVKIRELSEEQIEKLREEVGKFTVEGDLRREVTLSIKRLLDLGCYRGLRHRRSLPVRGQRTKTNARTRKGPRKPIKK</sequence>
<gene>
    <name evidence="1" type="primary">rpsM</name>
    <name type="ordered locus">APL_1781</name>
</gene>
<comment type="function">
    <text evidence="1">Located at the top of the head of the 30S subunit, it contacts several helices of the 16S rRNA. In the 70S ribosome it contacts the 23S rRNA (bridge B1a) and protein L5 of the 50S subunit (bridge B1b), connecting the 2 subunits; these bridges are implicated in subunit movement. Contacts the tRNAs in the A and P-sites.</text>
</comment>
<comment type="subunit">
    <text evidence="1">Part of the 30S ribosomal subunit. Forms a loose heterodimer with protein S19. Forms two bridges to the 50S subunit in the 70S ribosome.</text>
</comment>
<comment type="similarity">
    <text evidence="1">Belongs to the universal ribosomal protein uS13 family.</text>
</comment>